<accession>A8G745</accession>
<sequence>MTDTPTKQETQSNKDNVPGAIPVEQKKNNRNDRKRNRRGDSKNLERDSDWQERVVQIRRVSKTVKGGKKMSFRAIVVVGNEKGQVGVGVGKAGDVIGAVRKGVSDGKKNLVRVPLTPNNSIPTLSKGRDGAANVLIRPAAPGTGVIAGGSIRTVLELAGIKNVLAKRLGSKTPLNNARAAMVALSQLRTHKSASRERGISLEQLYS</sequence>
<reference key="1">
    <citation type="journal article" date="2007" name="PLoS Genet.">
        <title>Patterns and implications of gene gain and loss in the evolution of Prochlorococcus.</title>
        <authorList>
            <person name="Kettler G.C."/>
            <person name="Martiny A.C."/>
            <person name="Huang K."/>
            <person name="Zucker J."/>
            <person name="Coleman M.L."/>
            <person name="Rodrigue S."/>
            <person name="Chen F."/>
            <person name="Lapidus A."/>
            <person name="Ferriera S."/>
            <person name="Johnson J."/>
            <person name="Steglich C."/>
            <person name="Church G.M."/>
            <person name="Richardson P."/>
            <person name="Chisholm S.W."/>
        </authorList>
    </citation>
    <scope>NUCLEOTIDE SEQUENCE [LARGE SCALE GENOMIC DNA]</scope>
    <source>
        <strain>MIT 9215</strain>
    </source>
</reference>
<gene>
    <name evidence="1" type="primary">rpsE</name>
    <name evidence="1" type="synonym">rps5</name>
    <name type="ordered locus">P9215_18131</name>
</gene>
<keyword id="KW-0687">Ribonucleoprotein</keyword>
<keyword id="KW-0689">Ribosomal protein</keyword>
<keyword id="KW-0694">RNA-binding</keyword>
<keyword id="KW-0699">rRNA-binding</keyword>
<evidence type="ECO:0000255" key="1">
    <source>
        <dbReference type="HAMAP-Rule" id="MF_01307"/>
    </source>
</evidence>
<evidence type="ECO:0000256" key="2">
    <source>
        <dbReference type="SAM" id="MobiDB-lite"/>
    </source>
</evidence>
<evidence type="ECO:0000305" key="3"/>
<proteinExistence type="inferred from homology"/>
<organism>
    <name type="scientific">Prochlorococcus marinus (strain MIT 9215)</name>
    <dbReference type="NCBI Taxonomy" id="93060"/>
    <lineage>
        <taxon>Bacteria</taxon>
        <taxon>Bacillati</taxon>
        <taxon>Cyanobacteriota</taxon>
        <taxon>Cyanophyceae</taxon>
        <taxon>Synechococcales</taxon>
        <taxon>Prochlorococcaceae</taxon>
        <taxon>Prochlorococcus</taxon>
    </lineage>
</organism>
<feature type="chain" id="PRO_1000086038" description="Small ribosomal subunit protein uS5">
    <location>
        <begin position="1"/>
        <end position="206"/>
    </location>
</feature>
<feature type="domain" description="S5 DRBM" evidence="1">
    <location>
        <begin position="50"/>
        <end position="113"/>
    </location>
</feature>
<feature type="region of interest" description="Disordered" evidence="2">
    <location>
        <begin position="1"/>
        <end position="50"/>
    </location>
</feature>
<feature type="compositionally biased region" description="Polar residues" evidence="2">
    <location>
        <begin position="1"/>
        <end position="15"/>
    </location>
</feature>
<feature type="compositionally biased region" description="Basic and acidic residues" evidence="2">
    <location>
        <begin position="38"/>
        <end position="50"/>
    </location>
</feature>
<name>RS5_PROM2</name>
<dbReference type="EMBL" id="CP000825">
    <property type="protein sequence ID" value="ABV51426.1"/>
    <property type="molecule type" value="Genomic_DNA"/>
</dbReference>
<dbReference type="RefSeq" id="WP_012008436.1">
    <property type="nucleotide sequence ID" value="NC_009840.1"/>
</dbReference>
<dbReference type="SMR" id="A8G745"/>
<dbReference type="STRING" id="93060.P9215_18131"/>
<dbReference type="KEGG" id="pmh:P9215_18131"/>
<dbReference type="eggNOG" id="COG0098">
    <property type="taxonomic scope" value="Bacteria"/>
</dbReference>
<dbReference type="HOGENOM" id="CLU_065898_2_2_3"/>
<dbReference type="OrthoDB" id="9809045at2"/>
<dbReference type="Proteomes" id="UP000002014">
    <property type="component" value="Chromosome"/>
</dbReference>
<dbReference type="GO" id="GO:0015935">
    <property type="term" value="C:small ribosomal subunit"/>
    <property type="evidence" value="ECO:0007669"/>
    <property type="project" value="InterPro"/>
</dbReference>
<dbReference type="GO" id="GO:0019843">
    <property type="term" value="F:rRNA binding"/>
    <property type="evidence" value="ECO:0007669"/>
    <property type="project" value="UniProtKB-UniRule"/>
</dbReference>
<dbReference type="GO" id="GO:0003735">
    <property type="term" value="F:structural constituent of ribosome"/>
    <property type="evidence" value="ECO:0007669"/>
    <property type="project" value="InterPro"/>
</dbReference>
<dbReference type="GO" id="GO:0006412">
    <property type="term" value="P:translation"/>
    <property type="evidence" value="ECO:0007669"/>
    <property type="project" value="UniProtKB-UniRule"/>
</dbReference>
<dbReference type="FunFam" id="3.30.160.20:FF:000001">
    <property type="entry name" value="30S ribosomal protein S5"/>
    <property type="match status" value="1"/>
</dbReference>
<dbReference type="FunFam" id="3.30.230.10:FF:000002">
    <property type="entry name" value="30S ribosomal protein S5"/>
    <property type="match status" value="1"/>
</dbReference>
<dbReference type="Gene3D" id="3.30.160.20">
    <property type="match status" value="1"/>
</dbReference>
<dbReference type="Gene3D" id="3.30.230.10">
    <property type="match status" value="1"/>
</dbReference>
<dbReference type="HAMAP" id="MF_01307_B">
    <property type="entry name" value="Ribosomal_uS5_B"/>
    <property type="match status" value="1"/>
</dbReference>
<dbReference type="InterPro" id="IPR020568">
    <property type="entry name" value="Ribosomal_Su5_D2-typ_SF"/>
</dbReference>
<dbReference type="InterPro" id="IPR000851">
    <property type="entry name" value="Ribosomal_uS5"/>
</dbReference>
<dbReference type="InterPro" id="IPR005712">
    <property type="entry name" value="Ribosomal_uS5_bac-type"/>
</dbReference>
<dbReference type="InterPro" id="IPR005324">
    <property type="entry name" value="Ribosomal_uS5_C"/>
</dbReference>
<dbReference type="InterPro" id="IPR013810">
    <property type="entry name" value="Ribosomal_uS5_N"/>
</dbReference>
<dbReference type="InterPro" id="IPR018192">
    <property type="entry name" value="Ribosomal_uS5_N_CS"/>
</dbReference>
<dbReference type="InterPro" id="IPR014721">
    <property type="entry name" value="Ribsml_uS5_D2-typ_fold_subgr"/>
</dbReference>
<dbReference type="NCBIfam" id="TIGR01021">
    <property type="entry name" value="rpsE_bact"/>
    <property type="match status" value="1"/>
</dbReference>
<dbReference type="PANTHER" id="PTHR48277">
    <property type="entry name" value="MITOCHONDRIAL RIBOSOMAL PROTEIN S5"/>
    <property type="match status" value="1"/>
</dbReference>
<dbReference type="PANTHER" id="PTHR48277:SF1">
    <property type="entry name" value="MITOCHONDRIAL RIBOSOMAL PROTEIN S5"/>
    <property type="match status" value="1"/>
</dbReference>
<dbReference type="Pfam" id="PF00333">
    <property type="entry name" value="Ribosomal_S5"/>
    <property type="match status" value="1"/>
</dbReference>
<dbReference type="Pfam" id="PF03719">
    <property type="entry name" value="Ribosomal_S5_C"/>
    <property type="match status" value="1"/>
</dbReference>
<dbReference type="SUPFAM" id="SSF54768">
    <property type="entry name" value="dsRNA-binding domain-like"/>
    <property type="match status" value="1"/>
</dbReference>
<dbReference type="SUPFAM" id="SSF54211">
    <property type="entry name" value="Ribosomal protein S5 domain 2-like"/>
    <property type="match status" value="1"/>
</dbReference>
<dbReference type="PROSITE" id="PS00585">
    <property type="entry name" value="RIBOSOMAL_S5"/>
    <property type="match status" value="1"/>
</dbReference>
<dbReference type="PROSITE" id="PS50881">
    <property type="entry name" value="S5_DSRBD"/>
    <property type="match status" value="1"/>
</dbReference>
<protein>
    <recommendedName>
        <fullName evidence="1">Small ribosomal subunit protein uS5</fullName>
    </recommendedName>
    <alternativeName>
        <fullName evidence="3">30S ribosomal protein S5</fullName>
    </alternativeName>
</protein>
<comment type="function">
    <text evidence="1">With S4 and S12 plays an important role in translational accuracy.</text>
</comment>
<comment type="function">
    <text evidence="1">Located at the back of the 30S subunit body where it stabilizes the conformation of the head with respect to the body.</text>
</comment>
<comment type="subunit">
    <text evidence="1">Part of the 30S ribosomal subunit. Contacts proteins S4 and S8.</text>
</comment>
<comment type="domain">
    <text>The N-terminal domain interacts with the head of the 30S subunit; the C-terminal domain interacts with the body and contacts protein S4. The interaction surface between S4 and S5 is involved in control of translational fidelity.</text>
</comment>
<comment type="similarity">
    <text evidence="1">Belongs to the universal ribosomal protein uS5 family.</text>
</comment>